<dbReference type="EMBL" id="CP001074">
    <property type="protein sequence ID" value="ACE90972.1"/>
    <property type="molecule type" value="Genomic_DNA"/>
</dbReference>
<dbReference type="SMR" id="B3PYP3"/>
<dbReference type="KEGG" id="rec:RHECIAT_CH0002011"/>
<dbReference type="eggNOG" id="COG0264">
    <property type="taxonomic scope" value="Bacteria"/>
</dbReference>
<dbReference type="HOGENOM" id="CLU_047155_2_0_5"/>
<dbReference type="Proteomes" id="UP000008817">
    <property type="component" value="Chromosome"/>
</dbReference>
<dbReference type="GO" id="GO:0005737">
    <property type="term" value="C:cytoplasm"/>
    <property type="evidence" value="ECO:0007669"/>
    <property type="project" value="UniProtKB-SubCell"/>
</dbReference>
<dbReference type="GO" id="GO:0003746">
    <property type="term" value="F:translation elongation factor activity"/>
    <property type="evidence" value="ECO:0007669"/>
    <property type="project" value="UniProtKB-UniRule"/>
</dbReference>
<dbReference type="CDD" id="cd14275">
    <property type="entry name" value="UBA_EF-Ts"/>
    <property type="match status" value="1"/>
</dbReference>
<dbReference type="FunFam" id="1.10.286.20:FF:000001">
    <property type="entry name" value="Elongation factor Ts"/>
    <property type="match status" value="1"/>
</dbReference>
<dbReference type="FunFam" id="1.10.8.10:FF:000001">
    <property type="entry name" value="Elongation factor Ts"/>
    <property type="match status" value="1"/>
</dbReference>
<dbReference type="Gene3D" id="1.10.286.20">
    <property type="match status" value="1"/>
</dbReference>
<dbReference type="Gene3D" id="1.10.8.10">
    <property type="entry name" value="DNA helicase RuvA subunit, C-terminal domain"/>
    <property type="match status" value="1"/>
</dbReference>
<dbReference type="Gene3D" id="3.30.479.20">
    <property type="entry name" value="Elongation factor Ts, dimerisation domain"/>
    <property type="match status" value="2"/>
</dbReference>
<dbReference type="HAMAP" id="MF_00050">
    <property type="entry name" value="EF_Ts"/>
    <property type="match status" value="1"/>
</dbReference>
<dbReference type="InterPro" id="IPR036402">
    <property type="entry name" value="EF-Ts_dimer_sf"/>
</dbReference>
<dbReference type="InterPro" id="IPR001816">
    <property type="entry name" value="Transl_elong_EFTs/EF1B"/>
</dbReference>
<dbReference type="InterPro" id="IPR014039">
    <property type="entry name" value="Transl_elong_EFTs/EF1B_dimer"/>
</dbReference>
<dbReference type="InterPro" id="IPR018101">
    <property type="entry name" value="Transl_elong_Ts_CS"/>
</dbReference>
<dbReference type="InterPro" id="IPR009060">
    <property type="entry name" value="UBA-like_sf"/>
</dbReference>
<dbReference type="NCBIfam" id="TIGR00116">
    <property type="entry name" value="tsf"/>
    <property type="match status" value="1"/>
</dbReference>
<dbReference type="PANTHER" id="PTHR11741">
    <property type="entry name" value="ELONGATION FACTOR TS"/>
    <property type="match status" value="1"/>
</dbReference>
<dbReference type="PANTHER" id="PTHR11741:SF0">
    <property type="entry name" value="ELONGATION FACTOR TS, MITOCHONDRIAL"/>
    <property type="match status" value="1"/>
</dbReference>
<dbReference type="Pfam" id="PF00889">
    <property type="entry name" value="EF_TS"/>
    <property type="match status" value="1"/>
</dbReference>
<dbReference type="SUPFAM" id="SSF54713">
    <property type="entry name" value="Elongation factor Ts (EF-Ts), dimerisation domain"/>
    <property type="match status" value="2"/>
</dbReference>
<dbReference type="SUPFAM" id="SSF46934">
    <property type="entry name" value="UBA-like"/>
    <property type="match status" value="1"/>
</dbReference>
<dbReference type="PROSITE" id="PS01126">
    <property type="entry name" value="EF_TS_1"/>
    <property type="match status" value="1"/>
</dbReference>
<dbReference type="PROSITE" id="PS01127">
    <property type="entry name" value="EF_TS_2"/>
    <property type="match status" value="1"/>
</dbReference>
<gene>
    <name evidence="1" type="primary">tsf</name>
    <name type="ordered locus">RHECIAT_CH0002011</name>
</gene>
<feature type="chain" id="PRO_1000116777" description="Elongation factor Ts">
    <location>
        <begin position="1"/>
        <end position="308"/>
    </location>
</feature>
<feature type="region of interest" description="Involved in Mg(2+) ion dislocation from EF-Tu" evidence="1">
    <location>
        <begin position="80"/>
        <end position="83"/>
    </location>
</feature>
<comment type="function">
    <text evidence="1">Associates with the EF-Tu.GDP complex and induces the exchange of GDP to GTP. It remains bound to the aminoacyl-tRNA.EF-Tu.GTP complex up to the GTP hydrolysis stage on the ribosome.</text>
</comment>
<comment type="subcellular location">
    <subcellularLocation>
        <location evidence="1">Cytoplasm</location>
    </subcellularLocation>
</comment>
<comment type="similarity">
    <text evidence="1">Belongs to the EF-Ts family.</text>
</comment>
<proteinExistence type="inferred from homology"/>
<sequence>MSEITAAMVKELREKTGAGMMDCKKALAETNGDMEAAIDWLRAKGIAKADKKSGRTAAEGLIGVSSEGTKAVVVEVNSETDFVARNDAFQDLVRGIAKVAVSTNGSVEAVAAATYPASGKSVSDTIKDAIATIGENMNLRRSVALSVEDGVVATYIHNAVSDGLGKLGVLVALKSTGDKEALNAIGRQVAMHIAATAPLAIRPEEVDAAVAERERNVFIEQSRASGKPDNIIEKMVEGRMRKFFEEVALLSQAFVINPDLTVAAAVKEAEKAVGAPIEVAGMARLLLGEGVEKEETDFAAEVAAAVKG</sequence>
<evidence type="ECO:0000255" key="1">
    <source>
        <dbReference type="HAMAP-Rule" id="MF_00050"/>
    </source>
</evidence>
<reference key="1">
    <citation type="journal article" date="2010" name="Appl. Environ. Microbiol.">
        <title>Conserved symbiotic plasmid DNA sequences in the multireplicon pangenomic structure of Rhizobium etli.</title>
        <authorList>
            <person name="Gonzalez V."/>
            <person name="Acosta J.L."/>
            <person name="Santamaria R.I."/>
            <person name="Bustos P."/>
            <person name="Fernandez J.L."/>
            <person name="Hernandez Gonzalez I.L."/>
            <person name="Diaz R."/>
            <person name="Flores M."/>
            <person name="Palacios R."/>
            <person name="Mora J."/>
            <person name="Davila G."/>
        </authorList>
    </citation>
    <scope>NUCLEOTIDE SEQUENCE [LARGE SCALE GENOMIC DNA]</scope>
    <source>
        <strain>CIAT 652</strain>
    </source>
</reference>
<accession>B3PYP3</accession>
<protein>
    <recommendedName>
        <fullName evidence="1">Elongation factor Ts</fullName>
        <shortName evidence="1">EF-Ts</shortName>
    </recommendedName>
</protein>
<name>EFTS_RHIE6</name>
<organism>
    <name type="scientific">Rhizobium etli (strain CIAT 652)</name>
    <dbReference type="NCBI Taxonomy" id="491916"/>
    <lineage>
        <taxon>Bacteria</taxon>
        <taxon>Pseudomonadati</taxon>
        <taxon>Pseudomonadota</taxon>
        <taxon>Alphaproteobacteria</taxon>
        <taxon>Hyphomicrobiales</taxon>
        <taxon>Rhizobiaceae</taxon>
        <taxon>Rhizobium/Agrobacterium group</taxon>
        <taxon>Rhizobium</taxon>
    </lineage>
</organism>
<keyword id="KW-0963">Cytoplasm</keyword>
<keyword id="KW-0251">Elongation factor</keyword>
<keyword id="KW-0648">Protein biosynthesis</keyword>